<gene>
    <name evidence="1" type="primary">fabH</name>
    <name type="ordered locus">MMAR_0879</name>
</gene>
<proteinExistence type="inferred from homology"/>
<feature type="chain" id="PRO_1000187880" description="Mycobacterial beta-ketoacyl-[acyl-carrier-protein] synthase III">
    <location>
        <begin position="1"/>
        <end position="335"/>
    </location>
</feature>
<feature type="region of interest" description="ACP-binding" evidence="1">
    <location>
        <begin position="259"/>
        <end position="263"/>
    </location>
</feature>
<feature type="active site" evidence="1">
    <location>
        <position position="122"/>
    </location>
</feature>
<feature type="active site" evidence="1">
    <location>
        <position position="258"/>
    </location>
</feature>
<feature type="active site" evidence="1">
    <location>
        <position position="289"/>
    </location>
</feature>
<comment type="function">
    <text evidence="1">Catalyzes the condensation reaction of fatty acid synthesis by the addition to an acyl acceptor of two carbons from malonyl-ACP. Catalyzes the first condensation reaction which initiates fatty acid synthesis and may therefore play a role in governing the total rate of fatty acid production. Possesses both acetoacetyl-ACP synthase and acetyl transacylase activities. Its substrate specificity determines the biosynthesis of branched-chain and/or straight-chain of fatty acids.</text>
</comment>
<comment type="catalytic activity">
    <reaction evidence="1">
        <text>malonyl-[ACP] + dodecanoyl-CoA + H(+) = 3-oxotetradecanoyl-[ACP] + CO2 + CoA</text>
        <dbReference type="Rhea" id="RHEA:43640"/>
        <dbReference type="Rhea" id="RHEA-COMP:9623"/>
        <dbReference type="Rhea" id="RHEA-COMP:9645"/>
        <dbReference type="ChEBI" id="CHEBI:15378"/>
        <dbReference type="ChEBI" id="CHEBI:16526"/>
        <dbReference type="ChEBI" id="CHEBI:57287"/>
        <dbReference type="ChEBI" id="CHEBI:57375"/>
        <dbReference type="ChEBI" id="CHEBI:78449"/>
        <dbReference type="ChEBI" id="CHEBI:78473"/>
        <dbReference type="EC" id="2.3.1.301"/>
    </reaction>
    <physiologicalReaction direction="left-to-right" evidence="1">
        <dbReference type="Rhea" id="RHEA:43641"/>
    </physiologicalReaction>
</comment>
<comment type="pathway">
    <text evidence="1">Lipid metabolism; fatty acid biosynthesis.</text>
</comment>
<comment type="pathway">
    <text evidence="1">Lipid metabolism; mycolic acid biosynthesis.</text>
</comment>
<comment type="subunit">
    <text evidence="1">Homodimer.</text>
</comment>
<comment type="subcellular location">
    <subcellularLocation>
        <location evidence="1">Cytoplasm</location>
    </subcellularLocation>
</comment>
<comment type="domain">
    <text evidence="1">The last Arg residue of the ACP-binding site is essential for the weak association between ACP/AcpP and FabH.</text>
</comment>
<comment type="similarity">
    <text evidence="1">Belongs to the thiolase-like superfamily. FabH family.</text>
</comment>
<accession>B2HRM4</accession>
<reference key="1">
    <citation type="journal article" date="2008" name="Genome Res.">
        <title>Insights from the complete genome sequence of Mycobacterium marinum on the evolution of Mycobacterium tuberculosis.</title>
        <authorList>
            <person name="Stinear T.P."/>
            <person name="Seemann T."/>
            <person name="Harrison P.F."/>
            <person name="Jenkin G.A."/>
            <person name="Davies J.K."/>
            <person name="Johnson P.D."/>
            <person name="Abdellah Z."/>
            <person name="Arrowsmith C."/>
            <person name="Chillingworth T."/>
            <person name="Churcher C."/>
            <person name="Clarke K."/>
            <person name="Cronin A."/>
            <person name="Davis P."/>
            <person name="Goodhead I."/>
            <person name="Holroyd N."/>
            <person name="Jagels K."/>
            <person name="Lord A."/>
            <person name="Moule S."/>
            <person name="Mungall K."/>
            <person name="Norbertczak H."/>
            <person name="Quail M.A."/>
            <person name="Rabbinowitsch E."/>
            <person name="Walker D."/>
            <person name="White B."/>
            <person name="Whitehead S."/>
            <person name="Small P.L."/>
            <person name="Brosch R."/>
            <person name="Ramakrishnan L."/>
            <person name="Fischbach M.A."/>
            <person name="Parkhill J."/>
            <person name="Cole S.T."/>
        </authorList>
    </citation>
    <scope>NUCLEOTIDE SEQUENCE [LARGE SCALE GENOMIC DNA]</scope>
    <source>
        <strain>ATCC BAA-535 / M</strain>
    </source>
</reference>
<keyword id="KW-0012">Acyltransferase</keyword>
<keyword id="KW-0963">Cytoplasm</keyword>
<keyword id="KW-0275">Fatty acid biosynthesis</keyword>
<keyword id="KW-0276">Fatty acid metabolism</keyword>
<keyword id="KW-0444">Lipid biosynthesis</keyword>
<keyword id="KW-0443">Lipid metabolism</keyword>
<keyword id="KW-0511">Multifunctional enzyme</keyword>
<keyword id="KW-1185">Reference proteome</keyword>
<keyword id="KW-0808">Transferase</keyword>
<evidence type="ECO:0000255" key="1">
    <source>
        <dbReference type="HAMAP-Rule" id="MF_01815"/>
    </source>
</evidence>
<organism>
    <name type="scientific">Mycobacterium marinum (strain ATCC BAA-535 / M)</name>
    <dbReference type="NCBI Taxonomy" id="216594"/>
    <lineage>
        <taxon>Bacteria</taxon>
        <taxon>Bacillati</taxon>
        <taxon>Actinomycetota</taxon>
        <taxon>Actinomycetes</taxon>
        <taxon>Mycobacteriales</taxon>
        <taxon>Mycobacteriaceae</taxon>
        <taxon>Mycobacterium</taxon>
        <taxon>Mycobacterium ulcerans group</taxon>
    </lineage>
</organism>
<protein>
    <recommendedName>
        <fullName evidence="1">Mycobacterial beta-ketoacyl-[acyl-carrier-protein] synthase III</fullName>
        <shortName evidence="1">Beta-ketoacyl-ACP synthase III</shortName>
        <shortName evidence="1">KAS III</shortName>
        <ecNumber evidence="1">2.3.1.301</ecNumber>
    </recommendedName>
    <alternativeName>
        <fullName evidence="1">3-oxoacyl-[acyl-carrier-protein] synthase 3</fullName>
    </alternativeName>
    <alternativeName>
        <fullName evidence="1">3-oxoacyl-[acyl-carrier-protein] synthase III</fullName>
    </alternativeName>
</protein>
<dbReference type="EC" id="2.3.1.301" evidence="1"/>
<dbReference type="EMBL" id="CP000854">
    <property type="protein sequence ID" value="ACC39336.1"/>
    <property type="molecule type" value="Genomic_DNA"/>
</dbReference>
<dbReference type="RefSeq" id="WP_012392807.1">
    <property type="nucleotide sequence ID" value="NC_010612.1"/>
</dbReference>
<dbReference type="SMR" id="B2HRM4"/>
<dbReference type="STRING" id="216594.MMAR_0879"/>
<dbReference type="GeneID" id="34339325"/>
<dbReference type="KEGG" id="mmi:MMAR_0879"/>
<dbReference type="eggNOG" id="COG0332">
    <property type="taxonomic scope" value="Bacteria"/>
</dbReference>
<dbReference type="HOGENOM" id="CLU_039592_4_0_11"/>
<dbReference type="OrthoDB" id="9815506at2"/>
<dbReference type="UniPathway" id="UPA00094"/>
<dbReference type="UniPathway" id="UPA00915"/>
<dbReference type="Proteomes" id="UP000001190">
    <property type="component" value="Chromosome"/>
</dbReference>
<dbReference type="GO" id="GO:0005737">
    <property type="term" value="C:cytoplasm"/>
    <property type="evidence" value="ECO:0007669"/>
    <property type="project" value="UniProtKB-SubCell"/>
</dbReference>
<dbReference type="GO" id="GO:0004315">
    <property type="term" value="F:3-oxoacyl-[acyl-carrier-protein] synthase activity"/>
    <property type="evidence" value="ECO:0007669"/>
    <property type="project" value="InterPro"/>
</dbReference>
<dbReference type="GO" id="GO:0033818">
    <property type="term" value="F:beta-ketoacyl-acyl-carrier-protein synthase III activity"/>
    <property type="evidence" value="ECO:0007669"/>
    <property type="project" value="UniProtKB-UniRule"/>
</dbReference>
<dbReference type="GO" id="GO:0006633">
    <property type="term" value="P:fatty acid biosynthetic process"/>
    <property type="evidence" value="ECO:0007669"/>
    <property type="project" value="UniProtKB-UniRule"/>
</dbReference>
<dbReference type="GO" id="GO:0044550">
    <property type="term" value="P:secondary metabolite biosynthetic process"/>
    <property type="evidence" value="ECO:0007669"/>
    <property type="project" value="TreeGrafter"/>
</dbReference>
<dbReference type="CDD" id="cd00830">
    <property type="entry name" value="KAS_III"/>
    <property type="match status" value="1"/>
</dbReference>
<dbReference type="FunFam" id="3.40.47.10:FF:000076">
    <property type="entry name" value="3-oxoacyl-[acyl-carrier-protein] synthase 3"/>
    <property type="match status" value="1"/>
</dbReference>
<dbReference type="Gene3D" id="3.40.47.10">
    <property type="match status" value="2"/>
</dbReference>
<dbReference type="HAMAP" id="MF_01815">
    <property type="entry name" value="FabH"/>
    <property type="match status" value="1"/>
</dbReference>
<dbReference type="InterPro" id="IPR013747">
    <property type="entry name" value="ACP_syn_III_C"/>
</dbReference>
<dbReference type="InterPro" id="IPR013751">
    <property type="entry name" value="ACP_syn_III_N"/>
</dbReference>
<dbReference type="InterPro" id="IPR004655">
    <property type="entry name" value="FabH"/>
</dbReference>
<dbReference type="InterPro" id="IPR016039">
    <property type="entry name" value="Thiolase-like"/>
</dbReference>
<dbReference type="NCBIfam" id="TIGR00747">
    <property type="entry name" value="fabH"/>
    <property type="match status" value="1"/>
</dbReference>
<dbReference type="NCBIfam" id="NF006829">
    <property type="entry name" value="PRK09352.1"/>
    <property type="match status" value="1"/>
</dbReference>
<dbReference type="PANTHER" id="PTHR34069">
    <property type="entry name" value="3-OXOACYL-[ACYL-CARRIER-PROTEIN] SYNTHASE 3"/>
    <property type="match status" value="1"/>
</dbReference>
<dbReference type="PANTHER" id="PTHR34069:SF2">
    <property type="entry name" value="BETA-KETOACYL-[ACYL-CARRIER-PROTEIN] SYNTHASE III"/>
    <property type="match status" value="1"/>
</dbReference>
<dbReference type="Pfam" id="PF08545">
    <property type="entry name" value="ACP_syn_III"/>
    <property type="match status" value="1"/>
</dbReference>
<dbReference type="Pfam" id="PF08541">
    <property type="entry name" value="ACP_syn_III_C"/>
    <property type="match status" value="1"/>
</dbReference>
<dbReference type="SUPFAM" id="SSF53901">
    <property type="entry name" value="Thiolase-like"/>
    <property type="match status" value="1"/>
</dbReference>
<name>FABH_MYCMM</name>
<sequence>MTEIATTSGISSVGLLSVGAYRPTRVVTNDEICENIDSSDEWIYSRTGIKTRRFAAPEESAASMAIEASREAIAKAALTGSDIDGVIVATSTHFLQTPACAPIVAAALGCQNVPAFDISAGCSGFGHALGIAADMIRGGSAATILVIGTEKLSPTVDMTDRSNCFIFADGAASVLVGHSPIQGIGPTVWGSDGEQAAAIRQDIDWISHAENPAGPRPFLRMEGTAVFRWAAFEMGKVGQQAMDAAGVKPDEIDVFIPHQANSRINELLTKNLQLRPDAVIANDIEHTGNTSAASIPLAMAELLATGAAKPGDLALLIGYGAGLSYAAQVVRMPNS</sequence>